<name>ORR9_ORYSJ</name>
<reference key="1">
    <citation type="journal article" date="2006" name="Gene">
        <title>Identification and characterization of cytokinin-signalling gene families in rice.</title>
        <authorList>
            <person name="Ito Y."/>
            <person name="Kurata N."/>
        </authorList>
    </citation>
    <scope>NUCLEOTIDE SEQUENCE [GENOMIC DNA]</scope>
    <scope>INDUCTION BY CYTOKININ</scope>
    <source>
        <strain>cv. Nipponbare</strain>
    </source>
</reference>
<reference key="2">
    <citation type="journal article" date="2007" name="Plant Cell Physiol.">
        <title>Overexpression of a type-A response regulator alters rice morphology and cytokinin metabolism.</title>
        <authorList>
            <person name="Hirose N."/>
            <person name="Makita N."/>
            <person name="Kojima M."/>
            <person name="Kamada-Nobusada T."/>
            <person name="Sakakibara H."/>
        </authorList>
    </citation>
    <scope>NUCLEOTIDE SEQUENCE [MRNA]</scope>
    <source>
        <strain>cv. Nipponbare</strain>
    </source>
</reference>
<reference key="3">
    <citation type="journal article" date="2005" name="BMC Biol.">
        <title>The sequence of rice chromosomes 11 and 12, rich in disease resistance genes and recent gene duplications.</title>
        <authorList>
            <consortium name="The rice chromosomes 11 and 12 sequencing consortia"/>
        </authorList>
    </citation>
    <scope>NUCLEOTIDE SEQUENCE [LARGE SCALE GENOMIC DNA]</scope>
    <source>
        <strain>cv. Nipponbare</strain>
    </source>
</reference>
<reference key="4">
    <citation type="journal article" date="2005" name="Nature">
        <title>The map-based sequence of the rice genome.</title>
        <authorList>
            <consortium name="International rice genome sequencing project (IRGSP)"/>
        </authorList>
    </citation>
    <scope>NUCLEOTIDE SEQUENCE [LARGE SCALE GENOMIC DNA]</scope>
    <source>
        <strain>cv. Nipponbare</strain>
    </source>
</reference>
<reference key="5">
    <citation type="journal article" date="2008" name="Nucleic Acids Res.">
        <title>The rice annotation project database (RAP-DB): 2008 update.</title>
        <authorList>
            <consortium name="The rice annotation project (RAP)"/>
        </authorList>
    </citation>
    <scope>GENOME REANNOTATION</scope>
    <source>
        <strain>cv. Nipponbare</strain>
    </source>
</reference>
<reference key="6">
    <citation type="journal article" date="2013" name="Rice">
        <title>Improvement of the Oryza sativa Nipponbare reference genome using next generation sequence and optical map data.</title>
        <authorList>
            <person name="Kawahara Y."/>
            <person name="de la Bastide M."/>
            <person name="Hamilton J.P."/>
            <person name="Kanamori H."/>
            <person name="McCombie W.R."/>
            <person name="Ouyang S."/>
            <person name="Schwartz D.C."/>
            <person name="Tanaka T."/>
            <person name="Wu J."/>
            <person name="Zhou S."/>
            <person name="Childs K.L."/>
            <person name="Davidson R.M."/>
            <person name="Lin H."/>
            <person name="Quesada-Ocampo L."/>
            <person name="Vaillancourt B."/>
            <person name="Sakai H."/>
            <person name="Lee S.S."/>
            <person name="Kim J."/>
            <person name="Numa H."/>
            <person name="Itoh T."/>
            <person name="Buell C.R."/>
            <person name="Matsumoto T."/>
        </authorList>
    </citation>
    <scope>GENOME REANNOTATION</scope>
    <source>
        <strain>cv. Nipponbare</strain>
    </source>
</reference>
<reference key="7">
    <citation type="journal article" date="2005" name="PLoS Biol.">
        <title>The genomes of Oryza sativa: a history of duplications.</title>
        <authorList>
            <person name="Yu J."/>
            <person name="Wang J."/>
            <person name="Lin W."/>
            <person name="Li S."/>
            <person name="Li H."/>
            <person name="Zhou J."/>
            <person name="Ni P."/>
            <person name="Dong W."/>
            <person name="Hu S."/>
            <person name="Zeng C."/>
            <person name="Zhang J."/>
            <person name="Zhang Y."/>
            <person name="Li R."/>
            <person name="Xu Z."/>
            <person name="Li S."/>
            <person name="Li X."/>
            <person name="Zheng H."/>
            <person name="Cong L."/>
            <person name="Lin L."/>
            <person name="Yin J."/>
            <person name="Geng J."/>
            <person name="Li G."/>
            <person name="Shi J."/>
            <person name="Liu J."/>
            <person name="Lv H."/>
            <person name="Li J."/>
            <person name="Wang J."/>
            <person name="Deng Y."/>
            <person name="Ran L."/>
            <person name="Shi X."/>
            <person name="Wang X."/>
            <person name="Wu Q."/>
            <person name="Li C."/>
            <person name="Ren X."/>
            <person name="Wang J."/>
            <person name="Wang X."/>
            <person name="Li D."/>
            <person name="Liu D."/>
            <person name="Zhang X."/>
            <person name="Ji Z."/>
            <person name="Zhao W."/>
            <person name="Sun Y."/>
            <person name="Zhang Z."/>
            <person name="Bao J."/>
            <person name="Han Y."/>
            <person name="Dong L."/>
            <person name="Ji J."/>
            <person name="Chen P."/>
            <person name="Wu S."/>
            <person name="Liu J."/>
            <person name="Xiao Y."/>
            <person name="Bu D."/>
            <person name="Tan J."/>
            <person name="Yang L."/>
            <person name="Ye C."/>
            <person name="Zhang J."/>
            <person name="Xu J."/>
            <person name="Zhou Y."/>
            <person name="Yu Y."/>
            <person name="Zhang B."/>
            <person name="Zhuang S."/>
            <person name="Wei H."/>
            <person name="Liu B."/>
            <person name="Lei M."/>
            <person name="Yu H."/>
            <person name="Li Y."/>
            <person name="Xu H."/>
            <person name="Wei S."/>
            <person name="He X."/>
            <person name="Fang L."/>
            <person name="Zhang Z."/>
            <person name="Zhang Y."/>
            <person name="Huang X."/>
            <person name="Su Z."/>
            <person name="Tong W."/>
            <person name="Li J."/>
            <person name="Tong Z."/>
            <person name="Li S."/>
            <person name="Ye J."/>
            <person name="Wang L."/>
            <person name="Fang L."/>
            <person name="Lei T."/>
            <person name="Chen C.-S."/>
            <person name="Chen H.-C."/>
            <person name="Xu Z."/>
            <person name="Li H."/>
            <person name="Huang H."/>
            <person name="Zhang F."/>
            <person name="Xu H."/>
            <person name="Li N."/>
            <person name="Zhao C."/>
            <person name="Li S."/>
            <person name="Dong L."/>
            <person name="Huang Y."/>
            <person name="Li L."/>
            <person name="Xi Y."/>
            <person name="Qi Q."/>
            <person name="Li W."/>
            <person name="Zhang B."/>
            <person name="Hu W."/>
            <person name="Zhang Y."/>
            <person name="Tian X."/>
            <person name="Jiao Y."/>
            <person name="Liang X."/>
            <person name="Jin J."/>
            <person name="Gao L."/>
            <person name="Zheng W."/>
            <person name="Hao B."/>
            <person name="Liu S.-M."/>
            <person name="Wang W."/>
            <person name="Yuan L."/>
            <person name="Cao M."/>
            <person name="McDermott J."/>
            <person name="Samudrala R."/>
            <person name="Wang J."/>
            <person name="Wong G.K.-S."/>
            <person name="Yang H."/>
        </authorList>
    </citation>
    <scope>NUCLEOTIDE SEQUENCE [LARGE SCALE GENOMIC DNA]</scope>
    <source>
        <strain>cv. Nipponbare</strain>
    </source>
</reference>
<reference key="8">
    <citation type="journal article" date="2003" name="Science">
        <title>Collection, mapping, and annotation of over 28,000 cDNA clones from japonica rice.</title>
        <authorList>
            <consortium name="The rice full-length cDNA consortium"/>
        </authorList>
    </citation>
    <scope>NUCLEOTIDE SEQUENCE [LARGE SCALE MRNA]</scope>
    <source>
        <strain>cv. Nipponbare</strain>
    </source>
</reference>
<reference key="9">
    <citation type="journal article" date="2006" name="Plant Physiol.">
        <title>Whole-genome analysis of Oryza sativa reveals similar architecture of two-component signaling machinery with Arabidopsis.</title>
        <authorList>
            <person name="Pareek A."/>
            <person name="Singh A."/>
            <person name="Kumar M."/>
            <person name="Kushwaha H.R."/>
            <person name="Lynn A.M."/>
            <person name="Singla-Pareek S.L."/>
        </authorList>
    </citation>
    <scope>DISRUPTION PHENOTYPE</scope>
</reference>
<reference key="10">
    <citation type="journal article" date="2007" name="Plant Physiol.">
        <title>Nomenclature for two-component signaling elements of rice.</title>
        <authorList>
            <person name="Schaller G.E."/>
            <person name="Doi K."/>
            <person name="Hwang I."/>
            <person name="Kieber J.J."/>
            <person name="Khurana J.P."/>
            <person name="Kurata N."/>
            <person name="Mizuno T."/>
            <person name="Pareek A."/>
            <person name="Shiu S.H."/>
            <person name="Wu P."/>
            <person name="Yip W.K."/>
        </authorList>
    </citation>
    <scope>GENE FAMILY</scope>
    <scope>NOMENCLATURE</scope>
</reference>
<reference key="11">
    <citation type="journal article" date="2012" name="Plant Physiol.">
        <title>Characterization of genes involved in cytokinin signaling and metabolism from rice.</title>
        <authorList>
            <person name="Tsai Y.C."/>
            <person name="Weir N.R."/>
            <person name="Hill K."/>
            <person name="Zhang W."/>
            <person name="Kim H.J."/>
            <person name="Shiu S.H."/>
            <person name="Schaller G.E."/>
            <person name="Kieber J.J."/>
        </authorList>
    </citation>
    <scope>INDUCTION BY CYTOKININ</scope>
</reference>
<protein>
    <recommendedName>
        <fullName evidence="10">Two-component response regulator ORR9</fullName>
    </recommendedName>
    <alternativeName>
        <fullName evidence="8">OsRR9</fullName>
    </alternativeName>
    <alternativeName>
        <fullName evidence="7">OsRRA1</fullName>
    </alternativeName>
</protein>
<keyword id="KW-0932">Cytokinin signaling pathway</keyword>
<keyword id="KW-0597">Phosphoprotein</keyword>
<keyword id="KW-1185">Reference proteome</keyword>
<keyword id="KW-0804">Transcription</keyword>
<keyword id="KW-0805">Transcription regulation</keyword>
<keyword id="KW-0902">Two-component regulatory system</keyword>
<proteinExistence type="evidence at transcript level"/>
<comment type="function">
    <text evidence="1">Functions as a response regulator involved in His-to-Asp phosphorelay signal transduction system. Phosphorylation of the Asp residue in the receiver domain activates the ability of the protein to promote the transcription of target genes. Type-A response regulators seem to act as negative regulators of the cytokinin signaling.</text>
</comment>
<comment type="induction">
    <text evidence="5 6">By cytokinin in roots and shoots.</text>
</comment>
<comment type="PTM">
    <text evidence="10">Two-component system major event consists of a His-to-Asp phosphorelay between a sensor histidine kinase (HK) and a response regulator (RR). In plants, the His-to-Asp phosphorelay involves an additional intermediate named Histidine-containing phosphotransfer protein (HPt). This multistep phosphorelay consists of a His-Asp-His-Asp sequential transfer of a phosphate group between first a His and an Asp of the HK protein, followed by the transfer to a conserved His of the HPt protein and finally the transfer to an Asp in the receiver domain of the RR protein.</text>
</comment>
<comment type="disruption phenotype">
    <text evidence="4">Dwarf, viviparous, lesion mimic and sterility phenotypes.</text>
</comment>
<comment type="similarity">
    <text evidence="10">Belongs to the ARR family. Type-A subfamily.</text>
</comment>
<comment type="sequence caution" evidence="10">
    <conflict type="erroneous gene model prediction">
        <sequence resource="EMBL-CDS" id="ABA91414"/>
    </conflict>
</comment>
<feature type="chain" id="PRO_0000433832" description="Two-component response regulator ORR9">
    <location>
        <begin position="1"/>
        <end position="201"/>
    </location>
</feature>
<feature type="domain" description="Response regulatory" evidence="2">
    <location>
        <begin position="10"/>
        <end position="142"/>
    </location>
</feature>
<feature type="region of interest" description="Disordered" evidence="3">
    <location>
        <begin position="149"/>
        <end position="201"/>
    </location>
</feature>
<feature type="compositionally biased region" description="Low complexity" evidence="3">
    <location>
        <begin position="158"/>
        <end position="180"/>
    </location>
</feature>
<feature type="modified residue" description="4-aspartylphosphate" evidence="2">
    <location>
        <position position="75"/>
    </location>
</feature>
<dbReference type="EMBL" id="BR000256">
    <property type="protein sequence ID" value="FAA00260.1"/>
    <property type="molecule type" value="Genomic_DNA"/>
</dbReference>
<dbReference type="EMBL" id="AB249659">
    <property type="protein sequence ID" value="BAE79353.1"/>
    <property type="molecule type" value="mRNA"/>
</dbReference>
<dbReference type="EMBL" id="DP000010">
    <property type="protein sequence ID" value="ABA91414.2"/>
    <property type="status" value="ALT_SEQ"/>
    <property type="molecule type" value="Genomic_DNA"/>
</dbReference>
<dbReference type="EMBL" id="DP000010">
    <property type="protein sequence ID" value="ABA91415.2"/>
    <property type="molecule type" value="Genomic_DNA"/>
</dbReference>
<dbReference type="EMBL" id="AP008217">
    <property type="protein sequence ID" value="BAF27567.1"/>
    <property type="molecule type" value="Genomic_DNA"/>
</dbReference>
<dbReference type="EMBL" id="AP014967">
    <property type="protein sequence ID" value="BAT12637.1"/>
    <property type="molecule type" value="Genomic_DNA"/>
</dbReference>
<dbReference type="EMBL" id="CM000148">
    <property type="protein sequence ID" value="EEE51634.1"/>
    <property type="molecule type" value="Genomic_DNA"/>
</dbReference>
<dbReference type="EMBL" id="AK058585">
    <property type="protein sequence ID" value="BAG86743.1"/>
    <property type="molecule type" value="mRNA"/>
</dbReference>
<dbReference type="RefSeq" id="XP_015616666.1">
    <property type="nucleotide sequence ID" value="XM_015761180.1"/>
</dbReference>
<dbReference type="SMR" id="Q2RAP3"/>
<dbReference type="FunCoup" id="Q2RAP3">
    <property type="interactions" value="37"/>
</dbReference>
<dbReference type="STRING" id="39947.Q2RAP3"/>
<dbReference type="PaxDb" id="39947-Q2RAP3"/>
<dbReference type="EnsemblPlants" id="Os11t0143300-01">
    <property type="protein sequence ID" value="Os11t0143300-01"/>
    <property type="gene ID" value="Os11g0143300"/>
</dbReference>
<dbReference type="Gramene" id="Os11t0143300-01">
    <property type="protein sequence ID" value="Os11t0143300-01"/>
    <property type="gene ID" value="Os11g0143300"/>
</dbReference>
<dbReference type="KEGG" id="dosa:Os11g0143300"/>
<dbReference type="HOGENOM" id="CLU_000445_69_5_1"/>
<dbReference type="InParanoid" id="Q2RAP3"/>
<dbReference type="OrthoDB" id="60033at2759"/>
<dbReference type="Proteomes" id="UP000000763">
    <property type="component" value="Chromosome 11"/>
</dbReference>
<dbReference type="Proteomes" id="UP000007752">
    <property type="component" value="Chromosome 11"/>
</dbReference>
<dbReference type="Proteomes" id="UP000059680">
    <property type="component" value="Chromosome 11"/>
</dbReference>
<dbReference type="ExpressionAtlas" id="Q2RAP3">
    <property type="expression patterns" value="baseline and differential"/>
</dbReference>
<dbReference type="GO" id="GO:0009736">
    <property type="term" value="P:cytokinin-activated signaling pathway"/>
    <property type="evidence" value="ECO:0007669"/>
    <property type="project" value="UniProtKB-KW"/>
</dbReference>
<dbReference type="GO" id="GO:0000160">
    <property type="term" value="P:phosphorelay signal transduction system"/>
    <property type="evidence" value="ECO:0007669"/>
    <property type="project" value="UniProtKB-KW"/>
</dbReference>
<dbReference type="CDD" id="cd17581">
    <property type="entry name" value="REC_typeA_ARR"/>
    <property type="match status" value="1"/>
</dbReference>
<dbReference type="FunFam" id="3.40.50.2300:FF:000389">
    <property type="entry name" value="Two-component response regulator ORR9"/>
    <property type="match status" value="1"/>
</dbReference>
<dbReference type="Gene3D" id="3.40.50.2300">
    <property type="match status" value="1"/>
</dbReference>
<dbReference type="InterPro" id="IPR045279">
    <property type="entry name" value="ARR-like"/>
</dbReference>
<dbReference type="InterPro" id="IPR011006">
    <property type="entry name" value="CheY-like_superfamily"/>
</dbReference>
<dbReference type="InterPro" id="IPR001789">
    <property type="entry name" value="Sig_transdc_resp-reg_receiver"/>
</dbReference>
<dbReference type="PANTHER" id="PTHR43874">
    <property type="entry name" value="TWO-COMPONENT RESPONSE REGULATOR"/>
    <property type="match status" value="1"/>
</dbReference>
<dbReference type="PANTHER" id="PTHR43874:SF167">
    <property type="entry name" value="TWO-COMPONENT RESPONSE REGULATOR ARR9"/>
    <property type="match status" value="1"/>
</dbReference>
<dbReference type="Pfam" id="PF00072">
    <property type="entry name" value="Response_reg"/>
    <property type="match status" value="1"/>
</dbReference>
<dbReference type="SMART" id="SM00448">
    <property type="entry name" value="REC"/>
    <property type="match status" value="1"/>
</dbReference>
<dbReference type="SUPFAM" id="SSF52172">
    <property type="entry name" value="CheY-like"/>
    <property type="match status" value="1"/>
</dbReference>
<dbReference type="PROSITE" id="PS50110">
    <property type="entry name" value="RESPONSE_REGULATORY"/>
    <property type="match status" value="1"/>
</dbReference>
<gene>
    <name evidence="9" type="primary">RR9</name>
    <name evidence="12" type="ordered locus">Os11g0143300</name>
    <name evidence="11" type="ordered locus">LOC_Os11g04720</name>
    <name evidence="13" type="ORF">OsJ_32929</name>
</gene>
<sequence length="201" mass="22567">MAVAIEAPFHVLAVDDSLPDRKLIERLLKTSSFQVTTVDSGSKALEFLGLHDHEDSPISTQSDQQEVAVNLIITDYCMPGMTGYDLLKKIKESSYLRDIPVVIMSSDNIPSRINRCLEEGADEFFLKPVRLSDMSKLKPHILKSRCKEHYQQEQNLQSNSESNNSSNPTSENSSSSTSSNSHKRKAVDEEILPHTIRPRHS</sequence>
<evidence type="ECO:0000250" key="1">
    <source>
        <dbReference type="UniProtKB" id="Q9ZWS9"/>
    </source>
</evidence>
<evidence type="ECO:0000255" key="2">
    <source>
        <dbReference type="PROSITE-ProRule" id="PRU00169"/>
    </source>
</evidence>
<evidence type="ECO:0000256" key="3">
    <source>
        <dbReference type="SAM" id="MobiDB-lite"/>
    </source>
</evidence>
<evidence type="ECO:0000269" key="4">
    <source>
    </source>
</evidence>
<evidence type="ECO:0000269" key="5">
    <source>
    </source>
</evidence>
<evidence type="ECO:0000269" key="6">
    <source>
    </source>
</evidence>
<evidence type="ECO:0000303" key="7">
    <source>
    </source>
</evidence>
<evidence type="ECO:0000303" key="8">
    <source>
    </source>
</evidence>
<evidence type="ECO:0000303" key="9">
    <source>
    </source>
</evidence>
<evidence type="ECO:0000305" key="10"/>
<evidence type="ECO:0000312" key="11">
    <source>
        <dbReference type="EMBL" id="ABA91415.2"/>
    </source>
</evidence>
<evidence type="ECO:0000312" key="12">
    <source>
        <dbReference type="EMBL" id="BAF27567.1"/>
    </source>
</evidence>
<evidence type="ECO:0000312" key="13">
    <source>
        <dbReference type="EMBL" id="EEE51634.1"/>
    </source>
</evidence>
<accession>Q2RAP3</accession>
<accession>A0A0P0XYQ2</accession>
<accession>Q2RAP2</accession>
<organism>
    <name type="scientific">Oryza sativa subsp. japonica</name>
    <name type="common">Rice</name>
    <dbReference type="NCBI Taxonomy" id="39947"/>
    <lineage>
        <taxon>Eukaryota</taxon>
        <taxon>Viridiplantae</taxon>
        <taxon>Streptophyta</taxon>
        <taxon>Embryophyta</taxon>
        <taxon>Tracheophyta</taxon>
        <taxon>Spermatophyta</taxon>
        <taxon>Magnoliopsida</taxon>
        <taxon>Liliopsida</taxon>
        <taxon>Poales</taxon>
        <taxon>Poaceae</taxon>
        <taxon>BOP clade</taxon>
        <taxon>Oryzoideae</taxon>
        <taxon>Oryzeae</taxon>
        <taxon>Oryzinae</taxon>
        <taxon>Oryza</taxon>
        <taxon>Oryza sativa</taxon>
    </lineage>
</organism>